<organism>
    <name type="scientific">Lawsonia intracellularis (strain PHE/MN1-00)</name>
    <dbReference type="NCBI Taxonomy" id="363253"/>
    <lineage>
        <taxon>Bacteria</taxon>
        <taxon>Pseudomonadati</taxon>
        <taxon>Thermodesulfobacteriota</taxon>
        <taxon>Desulfovibrionia</taxon>
        <taxon>Desulfovibrionales</taxon>
        <taxon>Desulfovibrionaceae</taxon>
        <taxon>Lawsonia</taxon>
    </lineage>
</organism>
<dbReference type="EMBL" id="AM180252">
    <property type="protein sequence ID" value="CAJ55028.1"/>
    <property type="molecule type" value="Genomic_DNA"/>
</dbReference>
<dbReference type="RefSeq" id="WP_011527057.1">
    <property type="nucleotide sequence ID" value="NC_008011.1"/>
</dbReference>
<dbReference type="SMR" id="Q1MPP9"/>
<dbReference type="STRING" id="363253.LI0974"/>
<dbReference type="KEGG" id="lip:LI0974"/>
<dbReference type="eggNOG" id="COG0256">
    <property type="taxonomic scope" value="Bacteria"/>
</dbReference>
<dbReference type="HOGENOM" id="CLU_098841_0_1_7"/>
<dbReference type="OrthoDB" id="9810939at2"/>
<dbReference type="Proteomes" id="UP000002430">
    <property type="component" value="Chromosome"/>
</dbReference>
<dbReference type="GO" id="GO:0005737">
    <property type="term" value="C:cytoplasm"/>
    <property type="evidence" value="ECO:0007669"/>
    <property type="project" value="UniProtKB-ARBA"/>
</dbReference>
<dbReference type="GO" id="GO:1990904">
    <property type="term" value="C:ribonucleoprotein complex"/>
    <property type="evidence" value="ECO:0007669"/>
    <property type="project" value="UniProtKB-KW"/>
</dbReference>
<dbReference type="GO" id="GO:0005840">
    <property type="term" value="C:ribosome"/>
    <property type="evidence" value="ECO:0007669"/>
    <property type="project" value="UniProtKB-KW"/>
</dbReference>
<dbReference type="GO" id="GO:0008097">
    <property type="term" value="F:5S rRNA binding"/>
    <property type="evidence" value="ECO:0007669"/>
    <property type="project" value="TreeGrafter"/>
</dbReference>
<dbReference type="GO" id="GO:0003735">
    <property type="term" value="F:structural constituent of ribosome"/>
    <property type="evidence" value="ECO:0007669"/>
    <property type="project" value="InterPro"/>
</dbReference>
<dbReference type="GO" id="GO:0006412">
    <property type="term" value="P:translation"/>
    <property type="evidence" value="ECO:0007669"/>
    <property type="project" value="UniProtKB-UniRule"/>
</dbReference>
<dbReference type="CDD" id="cd00432">
    <property type="entry name" value="Ribosomal_L18_L5e"/>
    <property type="match status" value="1"/>
</dbReference>
<dbReference type="FunFam" id="3.30.420.100:FF:000001">
    <property type="entry name" value="50S ribosomal protein L18"/>
    <property type="match status" value="1"/>
</dbReference>
<dbReference type="Gene3D" id="3.30.420.100">
    <property type="match status" value="1"/>
</dbReference>
<dbReference type="HAMAP" id="MF_01337_B">
    <property type="entry name" value="Ribosomal_uL18_B"/>
    <property type="match status" value="1"/>
</dbReference>
<dbReference type="InterPro" id="IPR004389">
    <property type="entry name" value="Ribosomal_uL18_bac-type"/>
</dbReference>
<dbReference type="InterPro" id="IPR005484">
    <property type="entry name" value="Ribosomal_uL18_bac/euk"/>
</dbReference>
<dbReference type="NCBIfam" id="TIGR00060">
    <property type="entry name" value="L18_bact"/>
    <property type="match status" value="1"/>
</dbReference>
<dbReference type="PANTHER" id="PTHR12899">
    <property type="entry name" value="39S RIBOSOMAL PROTEIN L18, MITOCHONDRIAL"/>
    <property type="match status" value="1"/>
</dbReference>
<dbReference type="PANTHER" id="PTHR12899:SF3">
    <property type="entry name" value="LARGE RIBOSOMAL SUBUNIT PROTEIN UL18M"/>
    <property type="match status" value="1"/>
</dbReference>
<dbReference type="Pfam" id="PF00861">
    <property type="entry name" value="Ribosomal_L18p"/>
    <property type="match status" value="1"/>
</dbReference>
<dbReference type="SUPFAM" id="SSF53137">
    <property type="entry name" value="Translational machinery components"/>
    <property type="match status" value="1"/>
</dbReference>
<reference key="1">
    <citation type="submission" date="2005-11" db="EMBL/GenBank/DDBJ databases">
        <title>The complete genome sequence of Lawsonia intracellularis: the causative agent of proliferative enteropathy.</title>
        <authorList>
            <person name="Kaur K."/>
            <person name="Zhang Q."/>
            <person name="Beckler D."/>
            <person name="Munir S."/>
            <person name="Li L."/>
            <person name="Kinsley K."/>
            <person name="Herron L."/>
            <person name="Peterson A."/>
            <person name="May B."/>
            <person name="Singh S."/>
            <person name="Gebhart C."/>
            <person name="Kapur V."/>
        </authorList>
    </citation>
    <scope>NUCLEOTIDE SEQUENCE [LARGE SCALE GENOMIC DNA]</scope>
    <source>
        <strain>PHE/MN1-00</strain>
    </source>
</reference>
<protein>
    <recommendedName>
        <fullName evidence="1">Large ribosomal subunit protein uL18</fullName>
    </recommendedName>
    <alternativeName>
        <fullName evidence="2">50S ribosomal protein L18</fullName>
    </alternativeName>
</protein>
<gene>
    <name evidence="1" type="primary">rplR</name>
    <name type="ordered locus">LI0974</name>
</gene>
<comment type="function">
    <text evidence="1">This is one of the proteins that bind and probably mediate the attachment of the 5S RNA into the large ribosomal subunit, where it forms part of the central protuberance.</text>
</comment>
<comment type="subunit">
    <text evidence="1">Part of the 50S ribosomal subunit; part of the 5S rRNA/L5/L18/L25 subcomplex. Contacts the 5S and 23S rRNAs.</text>
</comment>
<comment type="similarity">
    <text evidence="1">Belongs to the universal ribosomal protein uL18 family.</text>
</comment>
<evidence type="ECO:0000255" key="1">
    <source>
        <dbReference type="HAMAP-Rule" id="MF_01337"/>
    </source>
</evidence>
<evidence type="ECO:0000305" key="2"/>
<name>RL18_LAWIP</name>
<feature type="chain" id="PRO_0000251324" description="Large ribosomal subunit protein uL18">
    <location>
        <begin position="1"/>
        <end position="120"/>
    </location>
</feature>
<accession>Q1MPP9</accession>
<keyword id="KW-1185">Reference proteome</keyword>
<keyword id="KW-0687">Ribonucleoprotein</keyword>
<keyword id="KW-0689">Ribosomal protein</keyword>
<keyword id="KW-0694">RNA-binding</keyword>
<keyword id="KW-0699">rRNA-binding</keyword>
<sequence>MSIKSKNKLRQHRKIRIRKKIFGTADQPRLVIFRSNLHIYAQLVDDITGSTLLTTSTLSLKDNGINIRANKSGSTLVGKEIARLAIEKQIIKIVFDRNGYLYHGRVKAVADGAREGGLKF</sequence>
<proteinExistence type="inferred from homology"/>